<protein>
    <recommendedName>
        <fullName>Gag-Pol polyprotein</fullName>
        <shortName>Pr180gag-pol</shortName>
    </recommendedName>
    <component>
        <recommendedName>
            <fullName>Matrix protein p15</fullName>
            <shortName>MA</shortName>
        </recommendedName>
    </component>
    <component>
        <recommendedName>
            <fullName>RNA-binding phosphoprotein p12</fullName>
        </recommendedName>
        <alternativeName>
            <fullName>pp12</fullName>
        </alternativeName>
    </component>
    <component>
        <recommendedName>
            <fullName>Capsid protein p30</fullName>
            <shortName>CA</shortName>
        </recommendedName>
    </component>
    <component>
        <recommendedName>
            <fullName>Nucleocapsid protein p10</fullName>
            <shortName>NC-pol</shortName>
        </recommendedName>
    </component>
    <component>
        <recommendedName>
            <fullName>Protease p14</fullName>
            <shortName>PR</shortName>
            <ecNumber>3.4.23.-</ecNumber>
        </recommendedName>
    </component>
    <component>
        <recommendedName>
            <fullName>Reverse transcriptase/ribonuclease H p80</fullName>
            <shortName>RT</shortName>
            <ecNumber>2.7.7.49</ecNumber>
            <ecNumber>2.7.7.7</ecNumber>
            <ecNumber>3.1.26.4</ecNumber>
        </recommendedName>
    </component>
    <component>
        <recommendedName>
            <fullName>Integrase p46</fullName>
            <shortName>IN</shortName>
            <ecNumber evidence="3">2.7.7.-</ecNumber>
            <ecNumber evidence="3">3.1.-.-</ecNumber>
        </recommendedName>
    </component>
</protein>
<organismHost>
    <name type="scientific">Homo sapiens</name>
    <name type="common">Human</name>
    <dbReference type="NCBI Taxonomy" id="9606"/>
</organismHost>
<proteinExistence type="evidence at protein level"/>
<name>POL_XMRV6</name>
<organism>
    <name type="scientific">Xenotropic MuLV-related virus (isolate VP62)</name>
    <name type="common">XMRV</name>
    <dbReference type="NCBI Taxonomy" id="373193"/>
    <lineage>
        <taxon>Viruses</taxon>
        <taxon>Riboviria</taxon>
        <taxon>Pararnavirae</taxon>
        <taxon>Artverviricota</taxon>
        <taxon>Revtraviricetes</taxon>
        <taxon>Ortervirales</taxon>
        <taxon>Retroviridae</taxon>
        <taxon>Orthoretrovirinae</taxon>
        <taxon>Gammaretrovirus</taxon>
        <taxon>Murine leukemia-related retroviruses</taxon>
    </lineage>
</organism>
<keyword id="KW-0002">3D-structure</keyword>
<keyword id="KW-0064">Aspartyl protease</keyword>
<keyword id="KW-0167">Capsid protein</keyword>
<keyword id="KW-0175">Coiled coil</keyword>
<keyword id="KW-0229">DNA integration</keyword>
<keyword id="KW-0233">DNA recombination</keyword>
<keyword id="KW-0238">DNA-binding</keyword>
<keyword id="KW-0239">DNA-directed DNA polymerase</keyword>
<keyword id="KW-0255">Endonuclease</keyword>
<keyword id="KW-1032">Host cell membrane</keyword>
<keyword id="KW-1043">Host membrane</keyword>
<keyword id="KW-0378">Hydrolase</keyword>
<keyword id="KW-0449">Lipoprotein</keyword>
<keyword id="KW-0460">Magnesium</keyword>
<keyword id="KW-0464">Manganese</keyword>
<keyword id="KW-0472">Membrane</keyword>
<keyword id="KW-0479">Metal-binding</keyword>
<keyword id="KW-0511">Multifunctional enzyme</keyword>
<keyword id="KW-0519">Myristate</keyword>
<keyword id="KW-0540">Nuclease</keyword>
<keyword id="KW-0548">Nucleotidyltransferase</keyword>
<keyword id="KW-0597">Phosphoprotein</keyword>
<keyword id="KW-0645">Protease</keyword>
<keyword id="KW-1185">Reference proteome</keyword>
<keyword id="KW-1159">RNA suppression of termination</keyword>
<keyword id="KW-0694">RNA-binding</keyword>
<keyword id="KW-0695">RNA-directed DNA polymerase</keyword>
<keyword id="KW-0808">Transferase</keyword>
<keyword id="KW-0832">Ubl conjugation</keyword>
<keyword id="KW-1179">Viral genome integration</keyword>
<keyword id="KW-0468">Viral matrix protein</keyword>
<keyword id="KW-0543">Viral nucleoprotein</keyword>
<keyword id="KW-0946">Virion</keyword>
<keyword id="KW-1160">Virus entry into host cell</keyword>
<keyword id="KW-0862">Zinc</keyword>
<keyword id="KW-0863">Zinc-finger</keyword>
<sequence>MGQTVTTPLSLTLQHWGDVQRIASNQSVDVKKRRWVTFCSAEWPTFNVGWPQDGTFNLGVISQVKSRVFCPGPHGHPDQVPYIVTWEALAYDPPPWVKPFVSPKPPPLPTAPVLPPGPSAQPPSRSALYPALTPSIKSKPPKPQVLPDSGGPLIDLLTEDPPPYGAQPSSSARENNEEEAATTSEVSPPSPMVSRLRGRRDPPAADSTTSQAFPLRMGGDGQLQYWPFSSSDLYNWKNNNPSFSEDPGKLTALIESVLITHQPTWDDCQQLLGTLLTGEEKQRVLLEARKAVRGNDGRPTQLPNEVNAAFPLERPDWDYTTTEGRNHLVLYRQLLLAGLQNAGRSPTNLAKVKGITQGPNESPSAFLERLKEAYRRYTPYDPEDPGQETNVSMSFIWQSAPDIGRKLERLEDLKSKTLGDLVREAEKIFNKRETPEEREERIRREIEEKEERRRAEDEQRERERDRRRHREMSKLLATVVIGQRQDRQGGERRRPQLDKDQCAYCKEKGHWAKDCPKKPRGPRGPRPQTSLLTLGDXGGQGQEPPPEPRITLKVGGQPVTFLVDTGAQHSVLTQNPGPLSDKSAWVQGATGGKRYRWTTDRKVHLATGKVTHSFLHVPDCPYPLLGRDLLTKLKAQIHFEGSGAQVVGPMGQPLQVLTLNIEDEYRLHETSKEPDVPLGSTWLSDFPQAWAETGGMGLAVRQAPLIIPLKATSTPVSIKQYPMSQEARLGIKPHIQRLLDQGILVPCQSPWNTPLLPVKKPGTNDYRPVQDLREVNKRVEDIHPTVPNPYNLLSGLPPSHQWYTVLDLKDAFFCLRLHPTSQPLFAFEWRDPEMGISGQLTWTRLPQGFKNSPTLFDEALHRDLADFRIQHPDLILLQYVDDLLLAATSEQDCQRGTRALLQTLGNLGYRASAKKAQICQKQVKYLGYLLKEGQRWLTEARKETVMGQPTPKTPRQLREFLGTAGFCRLWIPGFAEMAAPLYPLTKTGTLFNWGPDQQKAYQEIKQALLTAPALGLPDLTKPFELFVDEKQGYAKGVLTQKLGPWRRPVAYLSKKLDPVAAGWPPCLRMVAAIAVLTKDAGKLTMGQPLVILAPHAVEALVKQPPDRWLSNARMTHYQAMLLDTDRVQFGPVVALNPATLLPLPEKEAPHDCLEILAETHGTRPDLTDQPIPDADYTWYTDGSSFLQEGQRRAGAAVTTETEVIWARALPAGTSAQRAELIALTQALKMAEGKKLNVYTDSRYAFATAHVHGEIYRRRGLLTSEGREIKNKNEILALLKALFLPKRLSIIHCPGHQKGNSAEARGNRMADQAAREAAMKAVLETSTLLIEDSTPYTPPHFHYTETDLKRLRELGATYNQTKGYWVLQGKPVMPDQSVFELLDSLHRLTHLSPQKMKALLDREESPYYMLNRDRTIQYVTETCTACAQVNASKAKIGAGVRVRGHRPGTHWEVDFTEVKPGLYGYKYLLVFVDTFSGWVEAFPTKRETAKVVSKKLLEDIFPRFGMPQVLGSDNGPAFASQVSQSVADLLGIDWKLHCAYRPQSSGQVERMNRTIKETLTKLTLASGTRDWVLLLPLALYRARNTPGPHGLTPYEILYGAPPPLVNFHDPEMSKLTNSPSLQAHLQALQAVQQEVWKPLAAAYQDQLDQPVIPHPFRVGDAVWVRRHQTKNLEPRWKGPYTVLLTTPTALKVDGISAWIHAAHVKAATTPPAGTAWKVQRSQNPLKIRLTRGAP</sequence>
<feature type="initiator methionine" description="Removed; by host" evidence="1">
    <location>
        <position position="1"/>
    </location>
</feature>
<feature type="chain" id="PRO_0000390868" description="Gag-Pol polyprotein" evidence="1">
    <location>
        <begin position="2"/>
        <end position="1733"/>
    </location>
</feature>
<feature type="chain" id="PRO_0000390869" description="Matrix protein p15" evidence="1">
    <location>
        <begin position="2"/>
        <end position="129"/>
    </location>
</feature>
<feature type="chain" id="PRO_0000390870" description="RNA-binding phosphoprotein p12" evidence="1">
    <location>
        <begin position="130"/>
        <end position="213"/>
    </location>
</feature>
<feature type="chain" id="PRO_0000390871" description="Capsid protein p30" evidence="1">
    <location>
        <begin position="214"/>
        <end position="476"/>
    </location>
</feature>
<feature type="chain" id="PRO_0000390872" description="Nucleocapsid protein p10" evidence="1">
    <location>
        <begin position="477"/>
        <end position="532"/>
    </location>
</feature>
<feature type="chain" id="PRO_0000390873" description="Protease p14" evidence="1">
    <location>
        <begin position="533"/>
        <end position="657"/>
    </location>
</feature>
<feature type="chain" id="PRO_0000390874" description="Reverse transcriptase/ribonuclease H p80" evidence="1">
    <location>
        <begin position="658"/>
        <end position="1328"/>
    </location>
</feature>
<feature type="chain" id="PRO_0000390875" description="Integrase p46" evidence="1">
    <location>
        <begin position="1329"/>
        <end position="1733"/>
    </location>
</feature>
<feature type="domain" description="Peptidase A2" evidence="7">
    <location>
        <begin position="559"/>
        <end position="629"/>
    </location>
</feature>
<feature type="domain" description="Reverse transcriptase" evidence="8">
    <location>
        <begin position="739"/>
        <end position="930"/>
    </location>
</feature>
<feature type="domain" description="RNase H type-1" evidence="9">
    <location>
        <begin position="1172"/>
        <end position="1318"/>
    </location>
</feature>
<feature type="domain" description="Integrase catalytic" evidence="10">
    <location>
        <begin position="1442"/>
        <end position="1600"/>
    </location>
</feature>
<feature type="zinc finger region" description="CCHC-type" evidence="6">
    <location>
        <begin position="500"/>
        <end position="517"/>
    </location>
</feature>
<feature type="region of interest" description="Disordered" evidence="11">
    <location>
        <begin position="108"/>
        <end position="218"/>
    </location>
</feature>
<feature type="region of interest" description="Disordered" evidence="11">
    <location>
        <begin position="449"/>
        <end position="469"/>
    </location>
</feature>
<feature type="region of interest" description="Disordered" evidence="11">
    <location>
        <begin position="511"/>
        <end position="550"/>
    </location>
</feature>
<feature type="coiled-coil region" evidence="5">
    <location>
        <begin position="436"/>
        <end position="476"/>
    </location>
</feature>
<feature type="short sequence motif" description="PTAP/PSAP motif">
    <location>
        <begin position="109"/>
        <end position="112"/>
    </location>
</feature>
<feature type="short sequence motif" description="LYPX(n)L motif">
    <location>
        <begin position="128"/>
        <end position="132"/>
    </location>
</feature>
<feature type="short sequence motif" description="PPXY motif">
    <location>
        <begin position="161"/>
        <end position="164"/>
    </location>
</feature>
<feature type="compositionally biased region" description="Pro residues" evidence="11">
    <location>
        <begin position="108"/>
        <end position="121"/>
    </location>
</feature>
<feature type="compositionally biased region" description="Basic and acidic residues" evidence="11">
    <location>
        <begin position="449"/>
        <end position="464"/>
    </location>
</feature>
<feature type="compositionally biased region" description="Low complexity" evidence="11">
    <location>
        <begin position="526"/>
        <end position="535"/>
    </location>
</feature>
<feature type="active site" description="Protease; shared with dimeric partner" evidence="7">
    <location>
        <position position="564"/>
    </location>
</feature>
<feature type="binding site" evidence="15">
    <location>
        <position position="721"/>
    </location>
    <ligand>
        <name>RNA</name>
        <dbReference type="ChEBI" id="CHEBI:33697"/>
        <note>RNA template</note>
    </ligand>
</feature>
<feature type="binding site" evidence="15">
    <location>
        <position position="771"/>
    </location>
    <ligand>
        <name>RNA</name>
        <dbReference type="ChEBI" id="CHEBI:33697"/>
        <note>RNA template</note>
    </ligand>
</feature>
<feature type="binding site" evidence="15">
    <location>
        <position position="773"/>
    </location>
    <ligand>
        <name>RNA</name>
        <dbReference type="ChEBI" id="CHEBI:33697"/>
        <note>RNA template</note>
    </ligand>
</feature>
<feature type="binding site" evidence="15">
    <location>
        <position position="787"/>
    </location>
    <ligand>
        <name>RNA</name>
        <dbReference type="ChEBI" id="CHEBI:33697"/>
        <note>RNA template</note>
    </ligand>
</feature>
<feature type="binding site" evidence="1">
    <location>
        <position position="807"/>
    </location>
    <ligand>
        <name>Mg(2+)</name>
        <dbReference type="ChEBI" id="CHEBI:18420"/>
        <label>1</label>
        <note>catalytic; for reverse transcriptase activity</note>
    </ligand>
</feature>
<feature type="binding site" evidence="15">
    <location>
        <position position="851"/>
    </location>
    <ligand>
        <name>RNA</name>
        <dbReference type="ChEBI" id="CHEBI:33697"/>
        <note>RNA template</note>
    </ligand>
</feature>
<feature type="binding site" evidence="15">
    <location>
        <position position="853"/>
    </location>
    <ligand>
        <name>RNA</name>
        <dbReference type="ChEBI" id="CHEBI:33697"/>
        <note>RNA template</note>
    </ligand>
</feature>
<feature type="binding site" evidence="1">
    <location>
        <position position="881"/>
    </location>
    <ligand>
        <name>Mg(2+)</name>
        <dbReference type="ChEBI" id="CHEBI:18420"/>
        <label>1</label>
        <note>catalytic; for reverse transcriptase activity</note>
    </ligand>
</feature>
<feature type="binding site" evidence="1">
    <location>
        <position position="882"/>
    </location>
    <ligand>
        <name>Mg(2+)</name>
        <dbReference type="ChEBI" id="CHEBI:18420"/>
        <label>1</label>
        <note>catalytic; for reverse transcriptase activity</note>
    </ligand>
</feature>
<feature type="binding site" evidence="15">
    <location>
        <position position="941"/>
    </location>
    <ligand>
        <name>DNA</name>
        <dbReference type="ChEBI" id="CHEBI:16991"/>
        <note>DNA primer</note>
    </ligand>
</feature>
<feature type="binding site" evidence="15">
    <location>
        <position position="955"/>
    </location>
    <ligand>
        <name>DNA</name>
        <dbReference type="ChEBI" id="CHEBI:16991"/>
        <note>DNA primer</note>
    </ligand>
</feature>
<feature type="binding site" evidence="15">
    <location>
        <position position="958"/>
    </location>
    <ligand>
        <name>DNA</name>
        <dbReference type="ChEBI" id="CHEBI:16991"/>
        <note>DNA primer</note>
    </ligand>
</feature>
<feature type="binding site" evidence="15">
    <location>
        <position position="966"/>
    </location>
    <ligand>
        <name>DNA</name>
        <dbReference type="ChEBI" id="CHEBI:16991"/>
        <note>DNA primer</note>
    </ligand>
</feature>
<feature type="binding site" evidence="15">
    <location>
        <position position="1054"/>
    </location>
    <ligand>
        <name>RNA</name>
        <dbReference type="ChEBI" id="CHEBI:33697"/>
        <note>RNA template</note>
    </ligand>
</feature>
<feature type="binding site" evidence="15">
    <location>
        <position position="1055"/>
    </location>
    <ligand>
        <name>RNA</name>
        <dbReference type="ChEBI" id="CHEBI:33697"/>
        <note>RNA template</note>
    </ligand>
</feature>
<feature type="binding site" evidence="15">
    <location>
        <position position="1063"/>
    </location>
    <ligand>
        <name>DNA</name>
        <dbReference type="ChEBI" id="CHEBI:16991"/>
        <note>DNA primer</note>
    </ligand>
</feature>
<feature type="binding site" evidence="15">
    <location>
        <position position="1082"/>
    </location>
    <ligand>
        <name>RNA</name>
        <dbReference type="ChEBI" id="CHEBI:33697"/>
        <note>RNA template</note>
    </ligand>
</feature>
<feature type="binding site" evidence="15">
    <location>
        <position position="1113"/>
    </location>
    <ligand>
        <name>DNA</name>
        <dbReference type="ChEBI" id="CHEBI:16991"/>
        <note>DNA primer</note>
    </ligand>
</feature>
<feature type="binding site" evidence="9">
    <location>
        <position position="1181"/>
    </location>
    <ligand>
        <name>Mg(2+)</name>
        <dbReference type="ChEBI" id="CHEBI:18420"/>
        <label>2</label>
        <note>catalytic; for RNase H activity</note>
    </ligand>
</feature>
<feature type="binding site" evidence="9 18 19">
    <location>
        <position position="1181"/>
    </location>
    <ligand>
        <name>Mg(2+)</name>
        <dbReference type="ChEBI" id="CHEBI:18420"/>
        <label>3</label>
        <note>catalytic; for RNase H activity</note>
    </ligand>
</feature>
<feature type="binding site" evidence="13">
    <location>
        <position position="1184"/>
    </location>
    <ligand>
        <name>RNA</name>
        <dbReference type="ChEBI" id="CHEBI:33697"/>
        <note>RNA template</note>
    </ligand>
</feature>
<feature type="binding site" evidence="13">
    <location>
        <position position="1186"/>
    </location>
    <ligand>
        <name>RNA</name>
        <dbReference type="ChEBI" id="CHEBI:33697"/>
        <note>RNA template</note>
    </ligand>
</feature>
<feature type="binding site" evidence="13">
    <location>
        <position position="1187"/>
    </location>
    <ligand>
        <name>DNA</name>
        <dbReference type="ChEBI" id="CHEBI:16991"/>
        <note>DNA primer</note>
    </ligand>
</feature>
<feature type="binding site" evidence="13">
    <location>
        <position position="1214"/>
    </location>
    <ligand>
        <name>DNA</name>
        <dbReference type="ChEBI" id="CHEBI:16991"/>
        <note>DNA primer</note>
    </ligand>
</feature>
<feature type="binding site" evidence="13">
    <location>
        <position position="1216"/>
    </location>
    <ligand>
        <name>DNA</name>
        <dbReference type="ChEBI" id="CHEBI:16991"/>
        <note>DNA primer</note>
    </ligand>
</feature>
<feature type="binding site" evidence="9 18 19">
    <location>
        <position position="1219"/>
    </location>
    <ligand>
        <name>Mg(2+)</name>
        <dbReference type="ChEBI" id="CHEBI:18420"/>
        <label>3</label>
        <note>catalytic; for RNase H activity</note>
    </ligand>
</feature>
<feature type="binding site" evidence="9 18 19">
    <location>
        <position position="1240"/>
    </location>
    <ligand>
        <name>Mg(2+)</name>
        <dbReference type="ChEBI" id="CHEBI:18420"/>
        <label>3</label>
        <note>catalytic; for RNase H activity</note>
    </ligand>
</feature>
<feature type="binding site" evidence="13">
    <location>
        <position position="1242"/>
    </location>
    <ligand>
        <name>RNA</name>
        <dbReference type="ChEBI" id="CHEBI:33697"/>
        <note>RNA template</note>
    </ligand>
</feature>
<feature type="binding site" evidence="13">
    <location>
        <position position="1266"/>
    </location>
    <ligand>
        <name>RNA</name>
        <dbReference type="ChEBI" id="CHEBI:33697"/>
        <note>RNA template</note>
    </ligand>
</feature>
<feature type="binding site" evidence="9">
    <location>
        <position position="1310"/>
    </location>
    <ligand>
        <name>Mg(2+)</name>
        <dbReference type="ChEBI" id="CHEBI:18420"/>
        <label>2</label>
        <note>catalytic; for RNase H activity</note>
    </ligand>
</feature>
<feature type="binding site" evidence="1">
    <location>
        <position position="1453"/>
    </location>
    <ligand>
        <name>Mg(2+)</name>
        <dbReference type="ChEBI" id="CHEBI:18420"/>
        <label>4</label>
        <note>catalytic; for integrase activity</note>
    </ligand>
</feature>
<feature type="binding site" evidence="1">
    <location>
        <position position="1512"/>
    </location>
    <ligand>
        <name>Mg(2+)</name>
        <dbReference type="ChEBI" id="CHEBI:18420"/>
        <label>4</label>
        <note>catalytic; for integrase activity</note>
    </ligand>
</feature>
<feature type="site" description="Cleavage; by viral protease p14" evidence="1">
    <location>
        <begin position="129"/>
        <end position="130"/>
    </location>
</feature>
<feature type="site" description="Cleavage; by viral protease p14" evidence="1">
    <location>
        <begin position="213"/>
        <end position="214"/>
    </location>
</feature>
<feature type="site" description="Cleavage; by viral protease p14" evidence="1">
    <location>
        <begin position="476"/>
        <end position="477"/>
    </location>
</feature>
<feature type="site" description="Cleavage; by viral protease p14" evidence="1">
    <location>
        <begin position="532"/>
        <end position="533"/>
    </location>
</feature>
<feature type="site" description="Cleavage; by viral protease p14" evidence="1">
    <location>
        <begin position="657"/>
        <end position="658"/>
    </location>
</feature>
<feature type="site" description="Cleavage; by viral protease p14" evidence="1">
    <location>
        <begin position="1328"/>
        <end position="1329"/>
    </location>
</feature>
<feature type="modified residue" description="Phosphoserine; by host" evidence="1">
    <location>
        <position position="190"/>
    </location>
</feature>
<feature type="lipid moiety-binding region" description="N-myristoyl glycine; by host" evidence="1">
    <location>
        <position position="2"/>
    </location>
</feature>
<feature type="sequence variant">
    <original>L</original>
    <variation>V</variation>
    <location>
        <position position="659"/>
    </location>
</feature>
<feature type="sequence variant">
    <original>R</original>
    <variation>W</variation>
    <location>
        <position position="666"/>
    </location>
</feature>
<feature type="sequence variant">
    <original>ETS</original>
    <variation>DTR</variation>
    <location>
        <begin position="669"/>
        <end position="671"/>
    </location>
</feature>
<feature type="sequence variant">
    <original>P</original>
    <variation>L</variation>
    <location>
        <position position="687"/>
    </location>
</feature>
<feature type="sequence variant">
    <original>D</original>
    <variation>N</variation>
    <location>
        <position position="1079"/>
    </location>
</feature>
<feature type="helix" evidence="25">
    <location>
        <begin position="540"/>
        <end position="542"/>
    </location>
</feature>
<feature type="strand" evidence="25">
    <location>
        <begin position="547"/>
        <end position="554"/>
    </location>
</feature>
<feature type="strand" evidence="25">
    <location>
        <begin position="557"/>
        <end position="563"/>
    </location>
</feature>
<feature type="strand" evidence="25">
    <location>
        <begin position="578"/>
        <end position="586"/>
    </location>
</feature>
<feature type="strand" evidence="25">
    <location>
        <begin position="593"/>
        <end position="598"/>
    </location>
</feature>
<feature type="strand" evidence="25">
    <location>
        <begin position="601"/>
        <end position="605"/>
    </location>
</feature>
<feature type="strand" evidence="25">
    <location>
        <begin position="608"/>
        <end position="612"/>
    </location>
</feature>
<feature type="strand" evidence="25">
    <location>
        <begin position="620"/>
        <end position="622"/>
    </location>
</feature>
<feature type="helix" evidence="25">
    <location>
        <begin position="627"/>
        <end position="633"/>
    </location>
</feature>
<feature type="strand" evidence="25">
    <location>
        <begin position="636"/>
        <end position="639"/>
    </location>
</feature>
<feature type="strand" evidence="25">
    <location>
        <begin position="644"/>
        <end position="647"/>
    </location>
</feature>
<feature type="helix" evidence="28">
    <location>
        <begin position="687"/>
        <end position="689"/>
    </location>
</feature>
<feature type="helix" evidence="28">
    <location>
        <begin position="691"/>
        <end position="694"/>
    </location>
</feature>
<feature type="helix" evidence="28">
    <location>
        <begin position="725"/>
        <end position="730"/>
    </location>
</feature>
<feature type="helix" evidence="28">
    <location>
        <begin position="732"/>
        <end position="739"/>
    </location>
</feature>
<feature type="turn" evidence="28">
    <location>
        <begin position="740"/>
        <end position="742"/>
    </location>
</feature>
<feature type="strand" evidence="28">
    <location>
        <begin position="743"/>
        <end position="746"/>
    </location>
</feature>
<feature type="helix" evidence="28">
    <location>
        <begin position="775"/>
        <end position="778"/>
    </location>
</feature>
<feature type="turn" evidence="28">
    <location>
        <begin position="789"/>
        <end position="791"/>
    </location>
</feature>
<feature type="helix" evidence="28">
    <location>
        <begin position="792"/>
        <end position="795"/>
    </location>
</feature>
<feature type="strand" evidence="28">
    <location>
        <begin position="802"/>
        <end position="808"/>
    </location>
</feature>
<feature type="helix" evidence="28">
    <location>
        <begin position="812"/>
        <end position="814"/>
    </location>
</feature>
<feature type="strand" evidence="28">
    <location>
        <begin position="815"/>
        <end position="817"/>
    </location>
</feature>
<feature type="turn" evidence="28">
    <location>
        <begin position="819"/>
        <end position="821"/>
    </location>
</feature>
<feature type="helix" evidence="28">
    <location>
        <begin position="822"/>
        <end position="824"/>
    </location>
</feature>
<feature type="strand" evidence="28">
    <location>
        <begin position="825"/>
        <end position="827"/>
    </location>
</feature>
<feature type="strand" evidence="28">
    <location>
        <begin position="840"/>
        <end position="844"/>
    </location>
</feature>
<feature type="helix" evidence="28">
    <location>
        <begin position="852"/>
        <end position="870"/>
    </location>
</feature>
<feature type="strand" evidence="28">
    <location>
        <begin position="874"/>
        <end position="879"/>
    </location>
</feature>
<feature type="strand" evidence="28">
    <location>
        <begin position="882"/>
        <end position="889"/>
    </location>
</feature>
<feature type="helix" evidence="28">
    <location>
        <begin position="890"/>
        <end position="907"/>
    </location>
</feature>
<feature type="strand" evidence="28">
    <location>
        <begin position="913"/>
        <end position="915"/>
    </location>
</feature>
<feature type="strand" evidence="28">
    <location>
        <begin position="917"/>
        <end position="925"/>
    </location>
</feature>
<feature type="strand" evidence="28">
    <location>
        <begin position="928"/>
        <end position="931"/>
    </location>
</feature>
<feature type="strand" evidence="28">
    <location>
        <begin position="934"/>
        <end position="937"/>
    </location>
</feature>
<feature type="helix" evidence="28">
    <location>
        <begin position="939"/>
        <end position="946"/>
    </location>
</feature>
<feature type="helix" evidence="28">
    <location>
        <begin position="954"/>
        <end position="964"/>
    </location>
</feature>
<feature type="helix" evidence="28">
    <location>
        <begin position="965"/>
        <end position="970"/>
    </location>
</feature>
<feature type="helix" evidence="28">
    <location>
        <begin position="974"/>
        <end position="977"/>
    </location>
</feature>
<feature type="turn" evidence="28">
    <location>
        <begin position="978"/>
        <end position="981"/>
    </location>
</feature>
<feature type="helix" evidence="28">
    <location>
        <begin position="982"/>
        <end position="984"/>
    </location>
</feature>
<feature type="helix" evidence="28">
    <location>
        <begin position="995"/>
        <end position="1009"/>
    </location>
</feature>
<feature type="strand" evidence="28">
    <location>
        <begin position="1023"/>
        <end position="1030"/>
    </location>
</feature>
<feature type="strand" evidence="28">
    <location>
        <begin position="1033"/>
        <end position="1042"/>
    </location>
</feature>
<feature type="strand" evidence="28">
    <location>
        <begin position="1045"/>
        <end position="1055"/>
    </location>
</feature>
<feature type="helix" evidence="28">
    <location>
        <begin position="1058"/>
        <end position="1062"/>
    </location>
</feature>
<feature type="helix" evidence="28">
    <location>
        <begin position="1065"/>
        <end position="1084"/>
    </location>
</feature>
<feature type="strand" evidence="28">
    <location>
        <begin position="1089"/>
        <end position="1095"/>
    </location>
</feature>
<feature type="helix" evidence="28">
    <location>
        <begin position="1098"/>
        <end position="1102"/>
    </location>
</feature>
<feature type="helix" evidence="28">
    <location>
        <begin position="1114"/>
        <end position="1121"/>
    </location>
</feature>
<feature type="turn" evidence="28">
    <location>
        <begin position="1124"/>
        <end position="1126"/>
    </location>
</feature>
<feature type="strand" evidence="28">
    <location>
        <begin position="1127"/>
        <end position="1132"/>
    </location>
</feature>
<feature type="turn" evidence="28">
    <location>
        <begin position="1137"/>
        <end position="1140"/>
    </location>
</feature>
<feature type="strand" evidence="26">
    <location>
        <begin position="1167"/>
        <end position="1169"/>
    </location>
</feature>
<feature type="strand" evidence="26">
    <location>
        <begin position="1175"/>
        <end position="1187"/>
    </location>
</feature>
<feature type="strand" evidence="26">
    <location>
        <begin position="1190"/>
        <end position="1198"/>
    </location>
</feature>
<feature type="strand" evidence="26">
    <location>
        <begin position="1203"/>
        <end position="1209"/>
    </location>
</feature>
<feature type="helix" evidence="26">
    <location>
        <begin position="1215"/>
        <end position="1229"/>
    </location>
</feature>
<feature type="turn" evidence="26">
    <location>
        <begin position="1230"/>
        <end position="1232"/>
    </location>
</feature>
<feature type="strand" evidence="26">
    <location>
        <begin position="1233"/>
        <end position="1239"/>
    </location>
</feature>
<feature type="helix" evidence="26">
    <location>
        <begin position="1242"/>
        <end position="1249"/>
    </location>
</feature>
<feature type="helix" evidence="27">
    <location>
        <begin position="1252"/>
        <end position="1255"/>
    </location>
</feature>
<feature type="strand" evidence="27">
    <location>
        <begin position="1257"/>
        <end position="1261"/>
    </location>
</feature>
<feature type="helix" evidence="26">
    <location>
        <begin position="1271"/>
        <end position="1280"/>
    </location>
</feature>
<feature type="strand" evidence="26">
    <location>
        <begin position="1283"/>
        <end position="1291"/>
    </location>
</feature>
<feature type="helix" evidence="27">
    <location>
        <begin position="1293"/>
        <end position="1295"/>
    </location>
</feature>
<feature type="strand" evidence="27">
    <location>
        <begin position="1296"/>
        <end position="1300"/>
    </location>
</feature>
<feature type="helix" evidence="26">
    <location>
        <begin position="1301"/>
        <end position="1321"/>
    </location>
</feature>
<reference key="1">
    <citation type="journal article" date="2006" name="PLoS Pathog.">
        <title>Identification of a novel Gammaretrovirus in prostate tumors of patients homozygous for R462Q RNASEL variant.</title>
        <authorList>
            <person name="Urisman A."/>
            <person name="Molinaro R.J."/>
            <person name="Fischer N."/>
            <person name="Plummer S.J."/>
            <person name="Casey G."/>
            <person name="Klein E.A."/>
            <person name="Malathi K."/>
            <person name="Magi-Galluzzi C."/>
            <person name="Tubbs R.R."/>
            <person name="Ganem D."/>
            <person name="Silverman R.H."/>
            <person name="DeRisi J.L."/>
        </authorList>
    </citation>
    <scope>NUCLEOTIDE SEQUENCE [GENOMIC RNA]</scope>
    <scope>RETRACTED PAPER</scope>
</reference>
<reference key="2">
    <citation type="journal article" date="2007" name="Proc. Natl. Acad. Sci. U.S.A.">
        <title>An infectious retrovirus susceptible to an IFN antiviral pathway from human prostate tumors.</title>
        <authorList>
            <person name="Dong B."/>
            <person name="Kim S."/>
            <person name="Hong S."/>
            <person name="Das Gupta J."/>
            <person name="Malathi K."/>
            <person name="Klein E.A."/>
            <person name="Ganem D."/>
            <person name="Derisi J.L."/>
            <person name="Chow S.A."/>
            <person name="Silverman R.H."/>
        </authorList>
    </citation>
    <scope>NUCLEOTIDE SEQUENCE [GENOMIC RNA]</scope>
</reference>
<reference key="3">
    <citation type="journal article" date="2012" name="PLoS Pathog.">
        <authorList>
            <person name="Urisman A."/>
            <person name="Molinaro R.J."/>
            <person name="Fischer N."/>
            <person name="Plummer S.J."/>
            <person name="Casey G."/>
            <person name="Klein E.A."/>
            <person name="Malathi K."/>
            <person name="Magi-Galluzzi C."/>
            <person name="Tubbs R.R."/>
            <person name="Ganem D."/>
            <person name="Silverman R.H."/>
            <person name="DeRisi J.L."/>
        </authorList>
    </citation>
    <scope>RETRACTION NOTICE OF PUBMED:16609730</scope>
</reference>
<reference evidence="21" key="4">
    <citation type="journal article" date="2011" name="Nat. Struct. Mol. Biol.">
        <title>Crystal structure of XMRV protease differs from the structures of other retropepsins.</title>
        <authorList>
            <person name="Li M."/>
            <person name="Dimaio F."/>
            <person name="Zhou D."/>
            <person name="Gustchina A."/>
            <person name="Lubkowski J."/>
            <person name="Dauter Z."/>
            <person name="Baker D."/>
            <person name="Wlodawer A."/>
        </authorList>
    </citation>
    <scope>X-RAY CRYSTALLOGRAPHY (1.97 ANGSTROMS) OF 533-657</scope>
    <scope>SUBUNIT (PROTEASE)</scope>
</reference>
<reference evidence="22" key="5">
    <citation type="journal article" date="2012" name="Antimicrob. Agents Chemother.">
        <title>Structural and inhibition studies of the RNase H function of xenotropic murine leukemia virus-related virus reverse transcriptase.</title>
        <authorList>
            <person name="Kirby K.A."/>
            <person name="Marchand B."/>
            <person name="Ong Y.T."/>
            <person name="Ndongwe T.P."/>
            <person name="Hachiya A."/>
            <person name="Michailidis E."/>
            <person name="Leslie M.D."/>
            <person name="Sietsema D.V."/>
            <person name="Fetterly T.L."/>
            <person name="Dorst C.A."/>
            <person name="Singh K."/>
            <person name="Wang Z."/>
            <person name="Parniak M.A."/>
            <person name="Sarafianos S.G."/>
        </authorList>
    </citation>
    <scope>X-RAY CRYSTALLOGRAPHY (1.50 ANGSTROMS) OF 1155-1328 IN COMPLEX WITH MG(2+)</scope>
    <scope>COFACTOR (REVERSE TRANSCRIPTASE/RIBONUCLEASE H P80)</scope>
    <scope>CATALYTIC ACTIVITY (REVERSE TRANSCRIPTASE/RIBONUCLEASE H P80)</scope>
    <scope>RNA-BINDING (REVERSE TRANSCRIPTASE/RIBONUCLEASE H P80)</scope>
    <scope>DNA-BINDING (REVERSE TRANSCRIPTASE/RIBONUCLEASE H P80)</scope>
</reference>
<reference evidence="23" key="6">
    <citation type="journal article" date="2012" name="Biosci. Rep.">
        <title>Crystal structure of xenotropic murine leukaemia virus-related virus (XMRV) ribonuclease H.</title>
        <authorList>
            <person name="Kim J.H."/>
            <person name="Kang S."/>
            <person name="Jung S.K."/>
            <person name="Yu K.R."/>
            <person name="Chung S.J."/>
            <person name="Chung B.H."/>
            <person name="Erikson R.L."/>
            <person name="Kim B.Y."/>
            <person name="Kim S.J."/>
        </authorList>
    </citation>
    <scope>X-RAY CRYSTALLOGRAPHY (2.60 ANGSTROMS) OF 1164-1320 IN COMPLEX WITH MG(2+)</scope>
    <scope>COFACTOR (REVERSE TRANSCRIPTASE/RIBONUCLEASE H P80)</scope>
    <scope>BIOPHYSICOCHEMICAL PROPERTIES</scope>
</reference>
<reference evidence="24" key="7">
    <citation type="journal article" date="2013" name="Nucleic Acids Res.">
        <title>Structural analysis of monomeric retroviral reverse transcriptase in complex with an RNA/DNA hybrid.</title>
        <authorList>
            <person name="Nowak E."/>
            <person name="Potrzebowski W."/>
            <person name="Konarev P.V."/>
            <person name="Rausch J.W."/>
            <person name="Bona M.K."/>
            <person name="Svergun D.I."/>
            <person name="Bujnicki J.M."/>
            <person name="Le Grice S.F."/>
            <person name="Nowotny M."/>
        </authorList>
    </citation>
    <scope>X-RAY CRYSTALLOGRAPHY (3.04 ANGSTROMS) OF 658-1328</scope>
    <source>
        <strain>Isolate VP62</strain>
    </source>
</reference>
<comment type="function">
    <molecule>Gag-Pol polyprotein</molecule>
    <text evidence="2">Plays a role in budding and is processed by the viral protease during virion maturation outside the cell. During budding, it recruits, in a PPXY-dependent or independent manner, Nedd4-like ubiquitin ligases that conjugate ubiquitin molecules to Gag, or to Gag binding host factors. Interaction with HECT ubiquitin ligases probably link the viral protein to the host ESCRT pathway and facilitate release.</text>
</comment>
<comment type="function">
    <molecule>Matrix protein p15</molecule>
    <text evidence="1">Targets Gag and gag-pol polyproteins to the plasma membrane via a multipartite membrane binding signal, that includes its myristoylated N-terminus. Also mediates nuclear localization of the pre-integration complex (By similarity).</text>
</comment>
<comment type="function">
    <molecule>Capsid protein p30</molecule>
    <text evidence="1">Forms the spherical core of the virion that encapsulates the genomic RNA-nucleocapsid complex.</text>
</comment>
<comment type="function">
    <molecule>Nucleocapsid protein p10</molecule>
    <text evidence="1">Involved in the packaging and encapsidation of two copies of the genome. Binds with high affinity to conserved UCUG elements within the packaging signal, located near the 5'-end of the genome. This binding is dependent on genome dimerization (By similarity).</text>
</comment>
<comment type="function">
    <molecule>Protease p14</molecule>
    <text evidence="7">The aspartyl protease mediates proteolytic cleavages of Gag and Gag-Pol polyproteins during or shortly after the release of the virion from the plasma membrane. Cleavages take place as an ordered, step-wise cascade to yield mature proteins. This process is called maturation. Displays maximal activity during the budding process just prior to particle release from the cell.</text>
</comment>
<comment type="function">
    <molecule>Reverse transcriptase/ribonuclease H p80</molecule>
    <text evidence="1">Multifunctional enzyme that converts the viral dimeric RNA genome into dsDNA in the cytoplasm, shortly after virus entry into the cell. This enzyme displays a DNA polymerase activity that can copy either DNA or RNA templates, and a ribonuclease H (RNase H) activity that cleaves the RNA strand of RNA-DNA heteroduplexes in a partially processive 3' to 5' endonucleasic mode. Conversion of viral genomic RNA into dsDNA requires many steps. A tRNA binds to the primer-binding site (PBS) situated at the 5' end of the viral RNA. RT uses the 3' end of the tRNA primer to perform a short round of RNA-dependent minus-strand DNA synthesis. The reading proceeds through the U5 region and ends after the repeated (R) region which is present at both ends of viral RNA. The portion of the RNA-DNA heteroduplex is digested by the RNase H, resulting in a ssDNA product attached to the tRNA primer. This ssDNA/tRNA hybridizes with the identical R region situated at the 3' end of viral RNA. This template exchange, known as minus-strand DNA strong stop transfer, can be either intra- or intermolecular. RT uses the 3' end of this newly synthesized short ssDNA to perform the RNA-dependent minus-strand DNA synthesis of the whole template. RNase H digests the RNA template except for a polypurine tract (PPT) situated at the 5' end of the genome. It is not clear if both polymerase and RNase H activities are simultaneous. RNase H probably can proceed both in a polymerase-dependent (RNA cut into small fragments by the same RT performing DNA synthesis) and a polymerase-independent mode (cleavage of remaining RNA fragments by free RTs). Secondly, RT performs DNA-directed plus-strand DNA synthesis using the PPT that has not been removed by RNase H as primers. PPT and tRNA primers are then removed by RNase H. The 3' and 5' ssDNA PBS regions hybridize to form a circular dsDNA intermediate. Strand displacement synthesis by RT to the PBS and PPT ends produces a blunt ended, linear dsDNA copy of the viral genome that includes long terminal repeats (LTRs) at both ends (By similarity).</text>
</comment>
<comment type="function">
    <molecule>Integrase p46</molecule>
    <text evidence="1">Catalyzes viral DNA integration into the host chromosome, by performing a series of DNA cutting and joining reactions. This enzyme activity takes place after virion entry into a cell and reverse transcription of the RNA genome in dsDNA. The first step in the integration process is 3' processing. This step requires a complex comprising the viral genome, matrix protein and integrase. This complex is called the pre-integration complex (PIC). The integrase protein removes 2 nucleotides from each 3' end of the viral DNA, leaving recessed CA OH's at the 3' ends. In the second step that requires cell division, the PIC enters cell nucleus. In the third step, termed strand transfer, the integrase protein joins the previously processed 3' ends to the 5' ends of strands of target cellular DNA at the site of integration. The last step is viral DNA integration into host chromosome (By similarity).</text>
</comment>
<comment type="catalytic activity">
    <molecule>Reverse transcriptase/ribonuclease H p80</molecule>
    <reaction evidence="8">
        <text>DNA(n) + a 2'-deoxyribonucleoside 5'-triphosphate = DNA(n+1) + diphosphate</text>
        <dbReference type="Rhea" id="RHEA:22508"/>
        <dbReference type="Rhea" id="RHEA-COMP:17339"/>
        <dbReference type="Rhea" id="RHEA-COMP:17340"/>
        <dbReference type="ChEBI" id="CHEBI:33019"/>
        <dbReference type="ChEBI" id="CHEBI:61560"/>
        <dbReference type="ChEBI" id="CHEBI:173112"/>
        <dbReference type="EC" id="2.7.7.49"/>
    </reaction>
</comment>
<comment type="catalytic activity">
    <molecule>Reverse transcriptase/ribonuclease H p80</molecule>
    <reaction evidence="8">
        <text>DNA(n) + a 2'-deoxyribonucleoside 5'-triphosphate = DNA(n+1) + diphosphate</text>
        <dbReference type="Rhea" id="RHEA:22508"/>
        <dbReference type="Rhea" id="RHEA-COMP:17339"/>
        <dbReference type="Rhea" id="RHEA-COMP:17340"/>
        <dbReference type="ChEBI" id="CHEBI:33019"/>
        <dbReference type="ChEBI" id="CHEBI:61560"/>
        <dbReference type="ChEBI" id="CHEBI:173112"/>
        <dbReference type="EC" id="2.7.7.7"/>
    </reaction>
</comment>
<comment type="catalytic activity">
    <molecule>Protease p14</molecule>
    <reaction evidence="9">
        <text>Endonucleolytic cleavage to 5'-phosphomonoester.</text>
        <dbReference type="EC" id="3.1.26.4"/>
    </reaction>
</comment>
<comment type="cofactor">
    <molecule>Reverse transcriptase/ribonuclease H p80</molecule>
    <cofactor evidence="1">
        <name>Mg(2+)</name>
        <dbReference type="ChEBI" id="CHEBI:18420"/>
    </cofactor>
    <text evidence="1">Binds 2 magnesium ions for reverse transcriptase polymerase activity.</text>
</comment>
<comment type="cofactor">
    <molecule>Reverse transcriptase/ribonuclease H p80</molecule>
    <cofactor evidence="18">
        <name>Mn(2+)</name>
        <dbReference type="ChEBI" id="CHEBI:29035"/>
    </cofactor>
    <cofactor evidence="13 14">
        <name>Mg(2+)</name>
        <dbReference type="ChEBI" id="CHEBI:18420"/>
    </cofactor>
    <text evidence="4 13">Binds 2 Mn(2+)/Mg(2+) ions for ribonuclease H (RNase H) activity (By similarity). Shows 4- to 6-fold increased rates of cleavage in the presence of Mn(2+) versus Mg2(2+) (PubMed:22252812).</text>
</comment>
<comment type="cofactor">
    <molecule>Integrase p46</molecule>
    <cofactor evidence="1">
        <name>Mg(2+)</name>
        <dbReference type="ChEBI" id="CHEBI:18420"/>
    </cofactor>
    <text evidence="1">Magnesium ions are required for integrase activity. Binds at least 1, maybe 2 magnesium ions.</text>
</comment>
<comment type="biophysicochemical properties">
    <kinetics>
        <KM evidence="14">10.4 nM for RNA/DNA duplex</KM>
    </kinetics>
</comment>
<comment type="subunit">
    <molecule>Capsid protein p30</molecule>
    <text evidence="1">Homohexamer. Further associates as homomultimer. The virus core is composed of a lattice formed from hexagonal rings, each containing six capsid monomers.</text>
</comment>
<comment type="subunit">
    <molecule>Protease p14</molecule>
    <text evidence="12 16">Homodimer (PubMed:21258323). The protease is a homodimer, whose active site consists of two apposed aspartic acid residues. The reverse transcriptase is a monomer (Probable).</text>
</comment>
<comment type="interaction">
    <interactant intactId="EBI-7978477">
        <id>A1Z651</id>
    </interactant>
    <interactant intactId="EBI-7978477">
        <id>A1Z651</id>
        <label>gag-pol</label>
    </interactant>
    <organismsDiffer>false</organismsDiffer>
    <experiments>2</experiments>
</comment>
<comment type="subcellular location">
    <molecule>Gag-Pol polyprotein</molecule>
    <subcellularLocation>
        <location evidence="16">Host cell membrane</location>
        <topology evidence="16">Lipid-anchor</topology>
    </subcellularLocation>
</comment>
<comment type="subcellular location">
    <molecule>Matrix protein p15</molecule>
    <subcellularLocation>
        <location evidence="16">Virion</location>
    </subcellularLocation>
</comment>
<comment type="subcellular location">
    <molecule>Capsid protein p30</molecule>
    <subcellularLocation>
        <location evidence="16">Virion</location>
    </subcellularLocation>
</comment>
<comment type="subcellular location">
    <molecule>Nucleocapsid protein p10</molecule>
    <subcellularLocation>
        <location evidence="16">Virion</location>
    </subcellularLocation>
</comment>
<comment type="domain">
    <molecule>Gag-Pol polyprotein</molecule>
    <text evidence="1">Late-budding domains (L domains) are short sequence motifs essential for viral particle release. They can occur individually or in close proximity within structural proteins. They interacts with sorting cellular proteins of the multivesicular body (MVB) pathway. Most of these proteins are class E vacuolar protein sorting factors belonging to ESCRT-I, ESCRT-II or ESCRT-III complexes. RNA-binding phosphoprotein p12 contains one L domain: a PPXY motif which potentially interacts with the WW domain 3 of NEDD4 E3 ubiquitin ligase. PPXY motif is essential for virus egress. Matrix protein p15 contains one L domain: a PTAP/PSAP motif, which potentially interacts with the UEV domain of TSG101. The junction between the matrix protein p15 and RNA-binding phosphoprotein p12 also contains one L domain: a LYPX(n)L motif which potentially interacts with PDCD6IP. Both PSAP and LYPX(n)L domains might play little to no role in budding and possibly drive residual virus release. contains (By similarity).</text>
</comment>
<comment type="PTM">
    <molecule>Gag-Pol polyprotein</molecule>
    <text evidence="1">Specific enzymatic cleavages by the viral protease yield mature proteins. The protease is released by autocatalytic cleavage. The polyprotein is cleaved during and after budding, this process is termed maturation (By similarity).</text>
</comment>
<comment type="PTM">
    <molecule>Capsid protein p30</molecule>
    <text>Sumoylated. Required for virus replication.</text>
</comment>
<comment type="PTM">
    <molecule>RNA-binding phosphoprotein p12</molecule>
    <text evidence="1">Phosphorylated on serine residues.</text>
</comment>
<comment type="miscellaneous">
    <molecule>Gag-Pol polyprotein</molecule>
    <text evidence="1">This protein is translated as a gag-pol fusion protein by episodic readthrough of the gag protein termination codon. Readthrough of the terminator codon TAG occurs between the codons for 536-Asp and 538-Gly (By similarity).</text>
</comment>
<comment type="miscellaneous">
    <molecule>Nucleocapsid protein p10</molecule>
    <text evidence="1">The nucleocapsid protein p10 released from Pol polyprotein (NC-pol) is a few amino acids shorter than the nucleocapsid protein p10 released from Gag polyprotein (NC-gag).</text>
</comment>
<comment type="miscellaneous">
    <molecule>Reverse transcriptase/ribonuclease H p80</molecule>
    <text evidence="8">The reverse transcriptase is an error-prone enzyme that lacks a proof-reading function. High mutations rate is a direct consequence of this characteristic. RT also displays frequent template switching leading to high recombination rate. Recombination mostly occurs between homologous regions of the two copackaged RNA genomes. If these two RNA molecules derive from different viral strains, reverse transcription will give rise to highly recombinated proviral DNAs.</text>
</comment>
<comment type="caution">
    <text evidence="17 20">Originally thought to be characterized from prostate tumors, the described gammaretrovirus XMRV is in fact laboratory-derived and there is no association of XMRV with prostate cancer.</text>
</comment>
<accession>A1Z651</accession>
<accession>Q27IE0</accession>
<dbReference type="EC" id="3.4.23.-"/>
<dbReference type="EC" id="2.7.7.49"/>
<dbReference type="EC" id="2.7.7.7"/>
<dbReference type="EC" id="3.1.26.4"/>
<dbReference type="EC" id="2.7.7.-" evidence="3"/>
<dbReference type="EC" id="3.1.-.-" evidence="3"/>
<dbReference type="EMBL" id="DQ399707">
    <property type="protein sequence ID" value="ABD49687.1"/>
    <property type="molecule type" value="Genomic_RNA"/>
</dbReference>
<dbReference type="EMBL" id="EF185282">
    <property type="protein sequence ID" value="ABM47428.1"/>
    <property type="molecule type" value="Genomic_RNA"/>
</dbReference>
<dbReference type="PDB" id="3NR6">
    <property type="method" value="X-ray"/>
    <property type="resolution" value="1.97 A"/>
    <property type="chains" value="A/B=533-657"/>
</dbReference>
<dbReference type="PDB" id="3P1G">
    <property type="method" value="X-ray"/>
    <property type="resolution" value="1.50 A"/>
    <property type="chains" value="A=1155-1328"/>
</dbReference>
<dbReference type="PDB" id="4E89">
    <property type="method" value="X-ray"/>
    <property type="resolution" value="2.60 A"/>
    <property type="chains" value="A=1164-1320"/>
</dbReference>
<dbReference type="PDB" id="4HKQ">
    <property type="method" value="X-ray"/>
    <property type="resolution" value="3.04 A"/>
    <property type="chains" value="A=658-1328"/>
</dbReference>
<dbReference type="PDBsum" id="3NR6"/>
<dbReference type="PDBsum" id="3P1G"/>
<dbReference type="PDBsum" id="4E89"/>
<dbReference type="PDBsum" id="4HKQ"/>
<dbReference type="SMR" id="A1Z651"/>
<dbReference type="IntAct" id="A1Z651">
    <property type="interactions" value="1"/>
</dbReference>
<dbReference type="MINT" id="A1Z651"/>
<dbReference type="MEROPS" id="A02.008"/>
<dbReference type="BRENDA" id="2.7.7.49">
    <property type="organism ID" value="12973"/>
</dbReference>
<dbReference type="BRENDA" id="3.1.13.2">
    <property type="organism ID" value="12973"/>
</dbReference>
<dbReference type="BRENDA" id="3.1.26.4">
    <property type="organism ID" value="12973"/>
</dbReference>
<dbReference type="BRENDA" id="3.4.23.B5">
    <property type="organism ID" value="12973"/>
</dbReference>
<dbReference type="EvolutionaryTrace" id="A1Z651"/>
<dbReference type="Proteomes" id="UP000002240">
    <property type="component" value="Segment"/>
</dbReference>
<dbReference type="Proteomes" id="UP000180675">
    <property type="component" value="Genome"/>
</dbReference>
<dbReference type="GO" id="GO:0020002">
    <property type="term" value="C:host cell plasma membrane"/>
    <property type="evidence" value="ECO:0007669"/>
    <property type="project" value="UniProtKB-SubCell"/>
</dbReference>
<dbReference type="GO" id="GO:0016020">
    <property type="term" value="C:membrane"/>
    <property type="evidence" value="ECO:0007669"/>
    <property type="project" value="UniProtKB-KW"/>
</dbReference>
<dbReference type="GO" id="GO:0019013">
    <property type="term" value="C:viral nucleocapsid"/>
    <property type="evidence" value="ECO:0007669"/>
    <property type="project" value="UniProtKB-KW"/>
</dbReference>
<dbReference type="GO" id="GO:0004190">
    <property type="term" value="F:aspartic-type endopeptidase activity"/>
    <property type="evidence" value="ECO:0007669"/>
    <property type="project" value="UniProtKB-KW"/>
</dbReference>
<dbReference type="GO" id="GO:0003677">
    <property type="term" value="F:DNA binding"/>
    <property type="evidence" value="ECO:0007669"/>
    <property type="project" value="UniProtKB-KW"/>
</dbReference>
<dbReference type="GO" id="GO:0003887">
    <property type="term" value="F:DNA-directed DNA polymerase activity"/>
    <property type="evidence" value="ECO:0007669"/>
    <property type="project" value="UniProtKB-KW"/>
</dbReference>
<dbReference type="GO" id="GO:0042802">
    <property type="term" value="F:identical protein binding"/>
    <property type="evidence" value="ECO:0000353"/>
    <property type="project" value="IntAct"/>
</dbReference>
<dbReference type="GO" id="GO:0003723">
    <property type="term" value="F:RNA binding"/>
    <property type="evidence" value="ECO:0007669"/>
    <property type="project" value="UniProtKB-KW"/>
</dbReference>
<dbReference type="GO" id="GO:0003964">
    <property type="term" value="F:RNA-directed DNA polymerase activity"/>
    <property type="evidence" value="ECO:0007669"/>
    <property type="project" value="UniProtKB-KW"/>
</dbReference>
<dbReference type="GO" id="GO:0004523">
    <property type="term" value="F:RNA-DNA hybrid ribonuclease activity"/>
    <property type="evidence" value="ECO:0007669"/>
    <property type="project" value="UniProtKB-EC"/>
</dbReference>
<dbReference type="GO" id="GO:0039660">
    <property type="term" value="F:structural constituent of virion"/>
    <property type="evidence" value="ECO:0007669"/>
    <property type="project" value="UniProtKB-KW"/>
</dbReference>
<dbReference type="GO" id="GO:0008270">
    <property type="term" value="F:zinc ion binding"/>
    <property type="evidence" value="ECO:0007669"/>
    <property type="project" value="UniProtKB-KW"/>
</dbReference>
<dbReference type="GO" id="GO:0015074">
    <property type="term" value="P:DNA integration"/>
    <property type="evidence" value="ECO:0007669"/>
    <property type="project" value="UniProtKB-KW"/>
</dbReference>
<dbReference type="GO" id="GO:0006310">
    <property type="term" value="P:DNA recombination"/>
    <property type="evidence" value="ECO:0007669"/>
    <property type="project" value="UniProtKB-KW"/>
</dbReference>
<dbReference type="GO" id="GO:0075713">
    <property type="term" value="P:establishment of integrated proviral latency"/>
    <property type="evidence" value="ECO:0007669"/>
    <property type="project" value="UniProtKB-KW"/>
</dbReference>
<dbReference type="GO" id="GO:0006508">
    <property type="term" value="P:proteolysis"/>
    <property type="evidence" value="ECO:0007669"/>
    <property type="project" value="UniProtKB-KW"/>
</dbReference>
<dbReference type="GO" id="GO:0046718">
    <property type="term" value="P:symbiont entry into host cell"/>
    <property type="evidence" value="ECO:0007669"/>
    <property type="project" value="UniProtKB-KW"/>
</dbReference>
<dbReference type="GO" id="GO:0044826">
    <property type="term" value="P:viral genome integration into host DNA"/>
    <property type="evidence" value="ECO:0007669"/>
    <property type="project" value="UniProtKB-KW"/>
</dbReference>
<dbReference type="GO" id="GO:0019068">
    <property type="term" value="P:virion assembly"/>
    <property type="evidence" value="ECO:0007669"/>
    <property type="project" value="InterPro"/>
</dbReference>
<dbReference type="CDD" id="cd09273">
    <property type="entry name" value="RNase_HI_RT_Bel"/>
    <property type="match status" value="1"/>
</dbReference>
<dbReference type="CDD" id="cd06095">
    <property type="entry name" value="RP_RTVL_H_like"/>
    <property type="match status" value="1"/>
</dbReference>
<dbReference type="CDD" id="cd03715">
    <property type="entry name" value="RT_ZFREV_like"/>
    <property type="match status" value="1"/>
</dbReference>
<dbReference type="FunFam" id="1.10.150.180:FF:000001">
    <property type="entry name" value="Gag polyprotein"/>
    <property type="match status" value="1"/>
</dbReference>
<dbReference type="FunFam" id="1.10.375.10:FF:000008">
    <property type="entry name" value="Gag polyprotein"/>
    <property type="match status" value="1"/>
</dbReference>
<dbReference type="FunFam" id="1.10.340.70:FF:000009">
    <property type="entry name" value="Gag-Pol polyprotein"/>
    <property type="match status" value="1"/>
</dbReference>
<dbReference type="FunFam" id="2.40.70.10:FF:000087">
    <property type="entry name" value="Gag-Pol polyprotein"/>
    <property type="match status" value="1"/>
</dbReference>
<dbReference type="FunFam" id="3.30.420.10:FF:000094">
    <property type="entry name" value="Gag-Pol polyprotein"/>
    <property type="match status" value="1"/>
</dbReference>
<dbReference type="FunFam" id="3.30.420.10:FF:000102">
    <property type="entry name" value="Gag-Pol polyprotein"/>
    <property type="match status" value="1"/>
</dbReference>
<dbReference type="FunFam" id="3.30.70.270:FF:000020">
    <property type="entry name" value="Transposon Tf2-6 polyprotein-like Protein"/>
    <property type="match status" value="1"/>
</dbReference>
<dbReference type="Gene3D" id="1.10.340.70">
    <property type="match status" value="1"/>
</dbReference>
<dbReference type="Gene3D" id="2.30.30.850">
    <property type="match status" value="1"/>
</dbReference>
<dbReference type="Gene3D" id="3.10.20.370">
    <property type="match status" value="1"/>
</dbReference>
<dbReference type="Gene3D" id="3.30.70.270">
    <property type="match status" value="2"/>
</dbReference>
<dbReference type="Gene3D" id="2.40.70.10">
    <property type="entry name" value="Acid Proteases"/>
    <property type="match status" value="1"/>
</dbReference>
<dbReference type="Gene3D" id="1.10.150.180">
    <property type="entry name" value="Gamma-retroviral matrix domain"/>
    <property type="match status" value="1"/>
</dbReference>
<dbReference type="Gene3D" id="3.10.10.10">
    <property type="entry name" value="HIV Type 1 Reverse Transcriptase, subunit A, domain 1"/>
    <property type="match status" value="1"/>
</dbReference>
<dbReference type="Gene3D" id="1.10.375.10">
    <property type="entry name" value="Human Immunodeficiency Virus Type 1 Capsid Protein"/>
    <property type="match status" value="1"/>
</dbReference>
<dbReference type="Gene3D" id="3.30.420.10">
    <property type="entry name" value="Ribonuclease H-like superfamily/Ribonuclease H"/>
    <property type="match status" value="2"/>
</dbReference>
<dbReference type="Gene3D" id="4.10.60.10">
    <property type="entry name" value="Zinc finger, CCHC-type"/>
    <property type="match status" value="1"/>
</dbReference>
<dbReference type="InterPro" id="IPR001969">
    <property type="entry name" value="Aspartic_peptidase_AS"/>
</dbReference>
<dbReference type="InterPro" id="IPR043502">
    <property type="entry name" value="DNA/RNA_pol_sf"/>
</dbReference>
<dbReference type="InterPro" id="IPR000840">
    <property type="entry name" value="G_retro_matrix"/>
</dbReference>
<dbReference type="InterPro" id="IPR036946">
    <property type="entry name" value="G_retro_matrix_sf"/>
</dbReference>
<dbReference type="InterPro" id="IPR039464">
    <property type="entry name" value="Gag-pol_Znf-H3C2"/>
</dbReference>
<dbReference type="InterPro" id="IPR002079">
    <property type="entry name" value="Gag_p12"/>
</dbReference>
<dbReference type="InterPro" id="IPR003036">
    <property type="entry name" value="Gag_P30"/>
</dbReference>
<dbReference type="InterPro" id="IPR001584">
    <property type="entry name" value="Integrase_cat-core"/>
</dbReference>
<dbReference type="InterPro" id="IPR040643">
    <property type="entry name" value="MLVIN_C"/>
</dbReference>
<dbReference type="InterPro" id="IPR001995">
    <property type="entry name" value="Peptidase_A2_cat"/>
</dbReference>
<dbReference type="InterPro" id="IPR021109">
    <property type="entry name" value="Peptidase_aspartic_dom_sf"/>
</dbReference>
<dbReference type="InterPro" id="IPR018061">
    <property type="entry name" value="Retropepsins"/>
</dbReference>
<dbReference type="InterPro" id="IPR008919">
    <property type="entry name" value="Retrov_capsid_N"/>
</dbReference>
<dbReference type="InterPro" id="IPR050462">
    <property type="entry name" value="Retroviral_Gag-Pol_poly"/>
</dbReference>
<dbReference type="InterPro" id="IPR010999">
    <property type="entry name" value="Retrovr_matrix"/>
</dbReference>
<dbReference type="InterPro" id="IPR043128">
    <property type="entry name" value="Rev_trsase/Diguanyl_cyclase"/>
</dbReference>
<dbReference type="InterPro" id="IPR012337">
    <property type="entry name" value="RNaseH-like_sf"/>
</dbReference>
<dbReference type="InterPro" id="IPR002156">
    <property type="entry name" value="RNaseH_domain"/>
</dbReference>
<dbReference type="InterPro" id="IPR036397">
    <property type="entry name" value="RNaseH_sf"/>
</dbReference>
<dbReference type="InterPro" id="IPR000477">
    <property type="entry name" value="RT_dom"/>
</dbReference>
<dbReference type="InterPro" id="IPR041577">
    <property type="entry name" value="RT_RNaseH_2"/>
</dbReference>
<dbReference type="InterPro" id="IPR001878">
    <property type="entry name" value="Znf_CCHC"/>
</dbReference>
<dbReference type="InterPro" id="IPR036875">
    <property type="entry name" value="Znf_CCHC_sf"/>
</dbReference>
<dbReference type="PANTHER" id="PTHR33166">
    <property type="entry name" value="GAG_P30 DOMAIN-CONTAINING PROTEIN"/>
    <property type="match status" value="1"/>
</dbReference>
<dbReference type="Pfam" id="PF01140">
    <property type="entry name" value="Gag_MA"/>
    <property type="match status" value="1"/>
</dbReference>
<dbReference type="Pfam" id="PF01141">
    <property type="entry name" value="Gag_p12"/>
    <property type="match status" value="1"/>
</dbReference>
<dbReference type="Pfam" id="PF02093">
    <property type="entry name" value="Gag_p30"/>
    <property type="match status" value="1"/>
</dbReference>
<dbReference type="Pfam" id="PF18697">
    <property type="entry name" value="MLVIN_C"/>
    <property type="match status" value="1"/>
</dbReference>
<dbReference type="Pfam" id="PF00075">
    <property type="entry name" value="RNase_H"/>
    <property type="match status" value="1"/>
</dbReference>
<dbReference type="Pfam" id="PF17919">
    <property type="entry name" value="RT_RNaseH_2"/>
    <property type="match status" value="1"/>
</dbReference>
<dbReference type="Pfam" id="PF00665">
    <property type="entry name" value="rve"/>
    <property type="match status" value="1"/>
</dbReference>
<dbReference type="Pfam" id="PF00077">
    <property type="entry name" value="RVP"/>
    <property type="match status" value="1"/>
</dbReference>
<dbReference type="Pfam" id="PF00078">
    <property type="entry name" value="RVT_1"/>
    <property type="match status" value="1"/>
</dbReference>
<dbReference type="Pfam" id="PF00098">
    <property type="entry name" value="zf-CCHC"/>
    <property type="match status" value="1"/>
</dbReference>
<dbReference type="Pfam" id="PF16721">
    <property type="entry name" value="zf-H3C2"/>
    <property type="match status" value="1"/>
</dbReference>
<dbReference type="SMART" id="SM00343">
    <property type="entry name" value="ZnF_C2HC"/>
    <property type="match status" value="1"/>
</dbReference>
<dbReference type="SUPFAM" id="SSF50630">
    <property type="entry name" value="Acid proteases"/>
    <property type="match status" value="1"/>
</dbReference>
<dbReference type="SUPFAM" id="SSF56672">
    <property type="entry name" value="DNA/RNA polymerases"/>
    <property type="match status" value="1"/>
</dbReference>
<dbReference type="SUPFAM" id="SSF47836">
    <property type="entry name" value="Retroviral matrix proteins"/>
    <property type="match status" value="1"/>
</dbReference>
<dbReference type="SUPFAM" id="SSF47943">
    <property type="entry name" value="Retrovirus capsid protein, N-terminal core domain"/>
    <property type="match status" value="1"/>
</dbReference>
<dbReference type="SUPFAM" id="SSF57756">
    <property type="entry name" value="Retrovirus zinc finger-like domains"/>
    <property type="match status" value="1"/>
</dbReference>
<dbReference type="SUPFAM" id="SSF53098">
    <property type="entry name" value="Ribonuclease H-like"/>
    <property type="match status" value="2"/>
</dbReference>
<dbReference type="PROSITE" id="PS50175">
    <property type="entry name" value="ASP_PROT_RETROV"/>
    <property type="match status" value="1"/>
</dbReference>
<dbReference type="PROSITE" id="PS00141">
    <property type="entry name" value="ASP_PROTEASE"/>
    <property type="match status" value="1"/>
</dbReference>
<dbReference type="PROSITE" id="PS50994">
    <property type="entry name" value="INTEGRASE"/>
    <property type="match status" value="1"/>
</dbReference>
<dbReference type="PROSITE" id="PS50879">
    <property type="entry name" value="RNASE_H_1"/>
    <property type="match status" value="1"/>
</dbReference>
<dbReference type="PROSITE" id="PS50878">
    <property type="entry name" value="RT_POL"/>
    <property type="match status" value="1"/>
</dbReference>
<dbReference type="PROSITE" id="PS50158">
    <property type="entry name" value="ZF_CCHC"/>
    <property type="match status" value="1"/>
</dbReference>
<gene>
    <name type="primary">gag-pol</name>
</gene>
<evidence type="ECO:0000250" key="1"/>
<evidence type="ECO:0000250" key="2">
    <source>
        <dbReference type="UniProtKB" id="P03332"/>
    </source>
</evidence>
<evidence type="ECO:0000250" key="3">
    <source>
        <dbReference type="UniProtKB" id="P03355"/>
    </source>
</evidence>
<evidence type="ECO:0000250" key="4">
    <source>
        <dbReference type="UniProtKB" id="Q2F7J3"/>
    </source>
</evidence>
<evidence type="ECO:0000255" key="5"/>
<evidence type="ECO:0000255" key="6">
    <source>
        <dbReference type="PROSITE-ProRule" id="PRU00047"/>
    </source>
</evidence>
<evidence type="ECO:0000255" key="7">
    <source>
        <dbReference type="PROSITE-ProRule" id="PRU00275"/>
    </source>
</evidence>
<evidence type="ECO:0000255" key="8">
    <source>
        <dbReference type="PROSITE-ProRule" id="PRU00405"/>
    </source>
</evidence>
<evidence type="ECO:0000255" key="9">
    <source>
        <dbReference type="PROSITE-ProRule" id="PRU00408"/>
    </source>
</evidence>
<evidence type="ECO:0000255" key="10">
    <source>
        <dbReference type="PROSITE-ProRule" id="PRU00457"/>
    </source>
</evidence>
<evidence type="ECO:0000256" key="11">
    <source>
        <dbReference type="SAM" id="MobiDB-lite"/>
    </source>
</evidence>
<evidence type="ECO:0000269" key="12">
    <source>
    </source>
</evidence>
<evidence type="ECO:0000269" key="13">
    <source>
    </source>
</evidence>
<evidence type="ECO:0000269" key="14">
    <source>
    </source>
</evidence>
<evidence type="ECO:0000269" key="15">
    <source>
    </source>
</evidence>
<evidence type="ECO:0000305" key="16"/>
<evidence type="ECO:0000305" key="17">
    <source>
    </source>
</evidence>
<evidence type="ECO:0000305" key="18">
    <source>
    </source>
</evidence>
<evidence type="ECO:0000305" key="19">
    <source>
    </source>
</evidence>
<evidence type="ECO:0000305" key="20">
    <source>
    </source>
</evidence>
<evidence type="ECO:0007744" key="21">
    <source>
        <dbReference type="PDB" id="3NR6"/>
    </source>
</evidence>
<evidence type="ECO:0007744" key="22">
    <source>
        <dbReference type="PDB" id="3P1G"/>
    </source>
</evidence>
<evidence type="ECO:0007744" key="23">
    <source>
        <dbReference type="PDB" id="4E89"/>
    </source>
</evidence>
<evidence type="ECO:0007744" key="24">
    <source>
        <dbReference type="PDB" id="4HKQ"/>
    </source>
</evidence>
<evidence type="ECO:0007829" key="25">
    <source>
        <dbReference type="PDB" id="3NR6"/>
    </source>
</evidence>
<evidence type="ECO:0007829" key="26">
    <source>
        <dbReference type="PDB" id="3P1G"/>
    </source>
</evidence>
<evidence type="ECO:0007829" key="27">
    <source>
        <dbReference type="PDB" id="4E89"/>
    </source>
</evidence>
<evidence type="ECO:0007829" key="28">
    <source>
        <dbReference type="PDB" id="4HKQ"/>
    </source>
</evidence>